<evidence type="ECO:0000255" key="1"/>
<evidence type="ECO:0000305" key="2"/>
<accession>O31833</accession>
<proteinExistence type="predicted"/>
<keyword id="KW-1003">Cell membrane</keyword>
<keyword id="KW-0472">Membrane</keyword>
<keyword id="KW-1185">Reference proteome</keyword>
<keyword id="KW-0812">Transmembrane</keyword>
<keyword id="KW-1133">Transmembrane helix</keyword>
<organism>
    <name type="scientific">Bacillus subtilis (strain 168)</name>
    <dbReference type="NCBI Taxonomy" id="224308"/>
    <lineage>
        <taxon>Bacteria</taxon>
        <taxon>Bacillati</taxon>
        <taxon>Bacillota</taxon>
        <taxon>Bacilli</taxon>
        <taxon>Bacillales</taxon>
        <taxon>Bacillaceae</taxon>
        <taxon>Bacillus</taxon>
    </lineage>
</organism>
<dbReference type="EMBL" id="AL009126">
    <property type="protein sequence ID" value="CAB13765.1"/>
    <property type="molecule type" value="Genomic_DNA"/>
</dbReference>
<dbReference type="PIR" id="D69897">
    <property type="entry name" value="D69897"/>
</dbReference>
<dbReference type="RefSeq" id="NP_389754.1">
    <property type="nucleotide sequence ID" value="NC_000964.3"/>
</dbReference>
<dbReference type="RefSeq" id="WP_004399412.1">
    <property type="nucleotide sequence ID" value="NZ_OZ025638.1"/>
</dbReference>
<dbReference type="SMR" id="O31833"/>
<dbReference type="FunCoup" id="O31833">
    <property type="interactions" value="11"/>
</dbReference>
<dbReference type="STRING" id="224308.BSU18730"/>
<dbReference type="TCDB" id="9.B.223.1.1">
    <property type="family name" value="the 4 tms duf2975 or yoas (yoas) family"/>
</dbReference>
<dbReference type="PaxDb" id="224308-BSU18730"/>
<dbReference type="DNASU" id="939982"/>
<dbReference type="EnsemblBacteria" id="CAB13765">
    <property type="protein sequence ID" value="CAB13765"/>
    <property type="gene ID" value="BSU_18730"/>
</dbReference>
<dbReference type="GeneID" id="939982"/>
<dbReference type="KEGG" id="bsu:BSU18730"/>
<dbReference type="PATRIC" id="fig|224308.179.peg.2042"/>
<dbReference type="eggNOG" id="ENOG502ZR8H">
    <property type="taxonomic scope" value="Bacteria"/>
</dbReference>
<dbReference type="InParanoid" id="O31833"/>
<dbReference type="OrthoDB" id="1100174at2"/>
<dbReference type="PhylomeDB" id="O31833"/>
<dbReference type="BioCyc" id="BSUB:BSU18730-MONOMER"/>
<dbReference type="Proteomes" id="UP000001570">
    <property type="component" value="Chromosome"/>
</dbReference>
<dbReference type="GO" id="GO:0005886">
    <property type="term" value="C:plasma membrane"/>
    <property type="evidence" value="ECO:0007669"/>
    <property type="project" value="UniProtKB-SubCell"/>
</dbReference>
<dbReference type="InterPro" id="IPR021354">
    <property type="entry name" value="DUF2975"/>
</dbReference>
<dbReference type="Pfam" id="PF11188">
    <property type="entry name" value="DUF2975"/>
    <property type="match status" value="1"/>
</dbReference>
<gene>
    <name type="primary">yoaS</name>
    <name type="ordered locus">BSU18730</name>
</gene>
<reference key="1">
    <citation type="journal article" date="1997" name="Nature">
        <title>The complete genome sequence of the Gram-positive bacterium Bacillus subtilis.</title>
        <authorList>
            <person name="Kunst F."/>
            <person name="Ogasawara N."/>
            <person name="Moszer I."/>
            <person name="Albertini A.M."/>
            <person name="Alloni G."/>
            <person name="Azevedo V."/>
            <person name="Bertero M.G."/>
            <person name="Bessieres P."/>
            <person name="Bolotin A."/>
            <person name="Borchert S."/>
            <person name="Borriss R."/>
            <person name="Boursier L."/>
            <person name="Brans A."/>
            <person name="Braun M."/>
            <person name="Brignell S.C."/>
            <person name="Bron S."/>
            <person name="Brouillet S."/>
            <person name="Bruschi C.V."/>
            <person name="Caldwell B."/>
            <person name="Capuano V."/>
            <person name="Carter N.M."/>
            <person name="Choi S.-K."/>
            <person name="Codani J.-J."/>
            <person name="Connerton I.F."/>
            <person name="Cummings N.J."/>
            <person name="Daniel R.A."/>
            <person name="Denizot F."/>
            <person name="Devine K.M."/>
            <person name="Duesterhoeft A."/>
            <person name="Ehrlich S.D."/>
            <person name="Emmerson P.T."/>
            <person name="Entian K.-D."/>
            <person name="Errington J."/>
            <person name="Fabret C."/>
            <person name="Ferrari E."/>
            <person name="Foulger D."/>
            <person name="Fritz C."/>
            <person name="Fujita M."/>
            <person name="Fujita Y."/>
            <person name="Fuma S."/>
            <person name="Galizzi A."/>
            <person name="Galleron N."/>
            <person name="Ghim S.-Y."/>
            <person name="Glaser P."/>
            <person name="Goffeau A."/>
            <person name="Golightly E.J."/>
            <person name="Grandi G."/>
            <person name="Guiseppi G."/>
            <person name="Guy B.J."/>
            <person name="Haga K."/>
            <person name="Haiech J."/>
            <person name="Harwood C.R."/>
            <person name="Henaut A."/>
            <person name="Hilbert H."/>
            <person name="Holsappel S."/>
            <person name="Hosono S."/>
            <person name="Hullo M.-F."/>
            <person name="Itaya M."/>
            <person name="Jones L.-M."/>
            <person name="Joris B."/>
            <person name="Karamata D."/>
            <person name="Kasahara Y."/>
            <person name="Klaerr-Blanchard M."/>
            <person name="Klein C."/>
            <person name="Kobayashi Y."/>
            <person name="Koetter P."/>
            <person name="Koningstein G."/>
            <person name="Krogh S."/>
            <person name="Kumano M."/>
            <person name="Kurita K."/>
            <person name="Lapidus A."/>
            <person name="Lardinois S."/>
            <person name="Lauber J."/>
            <person name="Lazarevic V."/>
            <person name="Lee S.-M."/>
            <person name="Levine A."/>
            <person name="Liu H."/>
            <person name="Masuda S."/>
            <person name="Mauel C."/>
            <person name="Medigue C."/>
            <person name="Medina N."/>
            <person name="Mellado R.P."/>
            <person name="Mizuno M."/>
            <person name="Moestl D."/>
            <person name="Nakai S."/>
            <person name="Noback M."/>
            <person name="Noone D."/>
            <person name="O'Reilly M."/>
            <person name="Ogawa K."/>
            <person name="Ogiwara A."/>
            <person name="Oudega B."/>
            <person name="Park S.-H."/>
            <person name="Parro V."/>
            <person name="Pohl T.M."/>
            <person name="Portetelle D."/>
            <person name="Porwollik S."/>
            <person name="Prescott A.M."/>
            <person name="Presecan E."/>
            <person name="Pujic P."/>
            <person name="Purnelle B."/>
            <person name="Rapoport G."/>
            <person name="Rey M."/>
            <person name="Reynolds S."/>
            <person name="Rieger M."/>
            <person name="Rivolta C."/>
            <person name="Rocha E."/>
            <person name="Roche B."/>
            <person name="Rose M."/>
            <person name="Sadaie Y."/>
            <person name="Sato T."/>
            <person name="Scanlan E."/>
            <person name="Schleich S."/>
            <person name="Schroeter R."/>
            <person name="Scoffone F."/>
            <person name="Sekiguchi J."/>
            <person name="Sekowska A."/>
            <person name="Seror S.J."/>
            <person name="Serror P."/>
            <person name="Shin B.-S."/>
            <person name="Soldo B."/>
            <person name="Sorokin A."/>
            <person name="Tacconi E."/>
            <person name="Takagi T."/>
            <person name="Takahashi H."/>
            <person name="Takemaru K."/>
            <person name="Takeuchi M."/>
            <person name="Tamakoshi A."/>
            <person name="Tanaka T."/>
            <person name="Terpstra P."/>
            <person name="Tognoni A."/>
            <person name="Tosato V."/>
            <person name="Uchiyama S."/>
            <person name="Vandenbol M."/>
            <person name="Vannier F."/>
            <person name="Vassarotti A."/>
            <person name="Viari A."/>
            <person name="Wambutt R."/>
            <person name="Wedler E."/>
            <person name="Wedler H."/>
            <person name="Weitzenegger T."/>
            <person name="Winters P."/>
            <person name="Wipat A."/>
            <person name="Yamamoto H."/>
            <person name="Yamane K."/>
            <person name="Yasumoto K."/>
            <person name="Yata K."/>
            <person name="Yoshida K."/>
            <person name="Yoshikawa H.-F."/>
            <person name="Zumstein E."/>
            <person name="Yoshikawa H."/>
            <person name="Danchin A."/>
        </authorList>
    </citation>
    <scope>NUCLEOTIDE SEQUENCE [LARGE SCALE GENOMIC DNA]</scope>
    <source>
        <strain>168</strain>
    </source>
</reference>
<comment type="subcellular location">
    <subcellularLocation>
        <location evidence="2">Cell membrane</location>
        <topology evidence="2">Multi-pass membrane protein</topology>
    </subcellularLocation>
</comment>
<sequence length="160" mass="17841">MNRMSTIFLKIALVLIGIPILALCIFLVPKVANYSAELFPNIAYIKYLVFIYLYVTAIPFYFALYQAFKLLSYIDKNKAFSGLSVRALKNIKYCAVTISIFYAAGMPVFYLMAEIDDAPGIIVIGLVIIFASMVIAVFAAVLQKLLKEAIDIKSENDLTV</sequence>
<protein>
    <recommendedName>
        <fullName>Uncharacterized membrane protein YoaS</fullName>
    </recommendedName>
</protein>
<feature type="chain" id="PRO_0000360451" description="Uncharacterized membrane protein YoaS">
    <location>
        <begin position="1"/>
        <end position="160"/>
    </location>
</feature>
<feature type="transmembrane region" description="Helical" evidence="1">
    <location>
        <begin position="7"/>
        <end position="27"/>
    </location>
</feature>
<feature type="transmembrane region" description="Helical" evidence="1">
    <location>
        <begin position="48"/>
        <end position="68"/>
    </location>
</feature>
<feature type="transmembrane region" description="Helical" evidence="1">
    <location>
        <begin position="95"/>
        <end position="115"/>
    </location>
</feature>
<feature type="transmembrane region" description="Helical" evidence="1">
    <location>
        <begin position="121"/>
        <end position="141"/>
    </location>
</feature>
<name>YOAS_BACSU</name>